<sequence length="417" mass="44137">MKSKSMCTTVGLIAMCLAGSAAAAGKPLYQTGPALSRSAAATATAEPSLQRVLSSPSTANAQVVQIDAGAVAPAEKLLELQLDGQTITATQAKVDALEGGDSIWYGNLGPRAGTRARTLSGVDPLNSAILVRSGDTVTGTIRYAGKLYRLRPLADGRHVLVQVDEQRMPQEHPAEYSLLPKFDMPNDGRVTAAQASSGSPATIRVLVVATNQAVTAYGGNMQSLVQLAVAEANQGYVNSNVGITLQLARYETTSYAETGNFTTDLQRFRVTNDGYMDSIHTSRNTYTADVGVIVLNNSSYCGLASGIGSTAATAFASVYWDCATGYYSFAHEIGHLQSARHDAATDPSTSPFAYGHGYRYGNSWRTIMAYACPSGCPRLNYWSNPNISYNGVPMGNASTADNQRVLVNTKANIAAFR</sequence>
<organism>
    <name type="scientific">Xanthomonas campestris pv. campestris (strain ATCC 33913 / DSM 3586 / NCPPB 528 / LMG 568 / P 25)</name>
    <dbReference type="NCBI Taxonomy" id="190485"/>
    <lineage>
        <taxon>Bacteria</taxon>
        <taxon>Pseudomonadati</taxon>
        <taxon>Pseudomonadota</taxon>
        <taxon>Gammaproteobacteria</taxon>
        <taxon>Lysobacterales</taxon>
        <taxon>Lysobacteraceae</taxon>
        <taxon>Xanthomonas</taxon>
    </lineage>
</organism>
<evidence type="ECO:0000250" key="1">
    <source>
        <dbReference type="UniProtKB" id="O75173"/>
    </source>
</evidence>
<evidence type="ECO:0000250" key="2">
    <source>
        <dbReference type="UniProtKB" id="Q9R4J4"/>
    </source>
</evidence>
<evidence type="ECO:0000255" key="3"/>
<evidence type="ECO:0000255" key="4">
    <source>
        <dbReference type="PROSITE-ProRule" id="PRU10095"/>
    </source>
</evidence>
<evidence type="ECO:0000305" key="5"/>
<evidence type="ECO:0000312" key="6">
    <source>
        <dbReference type="EMBL" id="AAM40265.1"/>
    </source>
</evidence>
<reference evidence="6" key="1">
    <citation type="journal article" date="2002" name="Nature">
        <title>Comparison of the genomes of two Xanthomonas pathogens with differing host specificities.</title>
        <authorList>
            <person name="da Silva A.C.R."/>
            <person name="Ferro J.A."/>
            <person name="Reinach F.C."/>
            <person name="Farah C.S."/>
            <person name="Furlan L.R."/>
            <person name="Quaggio R.B."/>
            <person name="Monteiro-Vitorello C.B."/>
            <person name="Van Sluys M.A."/>
            <person name="Almeida N.F. Jr."/>
            <person name="Alves L.M.C."/>
            <person name="do Amaral A.M."/>
            <person name="Bertolini M.C."/>
            <person name="Camargo L.E.A."/>
            <person name="Camarotte G."/>
            <person name="Cannavan F."/>
            <person name="Cardozo J."/>
            <person name="Chambergo F."/>
            <person name="Ciapina L.P."/>
            <person name="Cicarelli R.M.B."/>
            <person name="Coutinho L.L."/>
            <person name="Cursino-Santos J.R."/>
            <person name="El-Dorry H."/>
            <person name="Faria J.B."/>
            <person name="Ferreira A.J.S."/>
            <person name="Ferreira R.C.C."/>
            <person name="Ferro M.I.T."/>
            <person name="Formighieri E.F."/>
            <person name="Franco M.C."/>
            <person name="Greggio C.C."/>
            <person name="Gruber A."/>
            <person name="Katsuyama A.M."/>
            <person name="Kishi L.T."/>
            <person name="Leite R.P."/>
            <person name="Lemos E.G.M."/>
            <person name="Lemos M.V.F."/>
            <person name="Locali E.C."/>
            <person name="Machado M.A."/>
            <person name="Madeira A.M.B.N."/>
            <person name="Martinez-Rossi N.M."/>
            <person name="Martins E.C."/>
            <person name="Meidanis J."/>
            <person name="Menck C.F.M."/>
            <person name="Miyaki C.Y."/>
            <person name="Moon D.H."/>
            <person name="Moreira L.M."/>
            <person name="Novo M.T.M."/>
            <person name="Okura V.K."/>
            <person name="Oliveira M.C."/>
            <person name="Oliveira V.R."/>
            <person name="Pereira H.A."/>
            <person name="Rossi A."/>
            <person name="Sena J.A.D."/>
            <person name="Silva C."/>
            <person name="de Souza R.F."/>
            <person name="Spinola L.A.F."/>
            <person name="Takita M.A."/>
            <person name="Tamura R.E."/>
            <person name="Teixeira E.C."/>
            <person name="Tezza R.I.D."/>
            <person name="Trindade dos Santos M."/>
            <person name="Truffi D."/>
            <person name="Tsai S.M."/>
            <person name="White F.F."/>
            <person name="Setubal J.C."/>
            <person name="Kitajima J.P."/>
        </authorList>
    </citation>
    <scope>NUCLEOTIDE SEQUENCE [LARGE SCALE GENOMIC DNA]</scope>
    <source>
        <strain>ATCC 33913 / DSM 3586 / NCPPB 528 / LMG 568 / P 25</strain>
    </source>
</reference>
<comment type="function">
    <text evidence="2">Metalloprotease, specifically cleaves on the N-terminal side of aspartyl, glutamyl and cysteic acid residues.</text>
</comment>
<comment type="catalytic activity">
    <reaction evidence="2">
        <text>Cleavage of Xaa-|-Asp, Xaa-|-Glu and Xaa-|-cysteic acid bonds.</text>
        <dbReference type="EC" id="3.4.24.33"/>
    </reaction>
</comment>
<comment type="cofactor">
    <cofactor evidence="1">
        <name>Zn(2+)</name>
        <dbReference type="ChEBI" id="CHEBI:29105"/>
    </cofactor>
    <text evidence="1">Binds 1 zinc ion per subunit.</text>
</comment>
<comment type="similarity">
    <text evidence="5">Belongs to the peptidase M72 family.</text>
</comment>
<feature type="signal peptide" evidence="3">
    <location>
        <begin position="1"/>
        <end position="23"/>
    </location>
</feature>
<feature type="chain" id="PRO_0000395561" description="Peptidyl-Asp metalloendopeptidase" evidence="3">
    <location>
        <begin position="24"/>
        <end position="417"/>
    </location>
</feature>
<feature type="active site" evidence="1 4">
    <location>
        <position position="332"/>
    </location>
</feature>
<feature type="binding site" evidence="1 4">
    <location>
        <position position="331"/>
    </location>
    <ligand>
        <name>Zn(2+)</name>
        <dbReference type="ChEBI" id="CHEBI:29105"/>
        <note>catalytic</note>
    </ligand>
</feature>
<feature type="binding site" evidence="1 4">
    <location>
        <position position="335"/>
    </location>
    <ligand>
        <name>Zn(2+)</name>
        <dbReference type="ChEBI" id="CHEBI:29105"/>
        <note>catalytic</note>
    </ligand>
</feature>
<feature type="binding site" evidence="1 4">
    <location>
        <position position="341"/>
    </location>
    <ligand>
        <name>Zn(2+)</name>
        <dbReference type="ChEBI" id="CHEBI:29105"/>
        <note>catalytic</note>
    </ligand>
</feature>
<gene>
    <name type="ordered locus">XCC0955</name>
</gene>
<keyword id="KW-0378">Hydrolase</keyword>
<keyword id="KW-0479">Metal-binding</keyword>
<keyword id="KW-0482">Metalloprotease</keyword>
<keyword id="KW-0645">Protease</keyword>
<keyword id="KW-1185">Reference proteome</keyword>
<keyword id="KW-0732">Signal</keyword>
<keyword id="KW-0862">Zinc</keyword>
<proteinExistence type="inferred from homology"/>
<accession>Q8PC00</accession>
<dbReference type="EC" id="3.4.24.33"/>
<dbReference type="EMBL" id="AE008922">
    <property type="protein sequence ID" value="AAM40265.1"/>
    <property type="molecule type" value="Genomic_DNA"/>
</dbReference>
<dbReference type="RefSeq" id="NP_636341.1">
    <property type="nucleotide sequence ID" value="NC_003902.1"/>
</dbReference>
<dbReference type="RefSeq" id="WP_011036169.1">
    <property type="nucleotide sequence ID" value="NC_003902.1"/>
</dbReference>
<dbReference type="SMR" id="Q8PC00"/>
<dbReference type="STRING" id="190485.XCC0955"/>
<dbReference type="EnsemblBacteria" id="AAM40265">
    <property type="protein sequence ID" value="AAM40265"/>
    <property type="gene ID" value="XCC0955"/>
</dbReference>
<dbReference type="KEGG" id="xcc:XCC0955"/>
<dbReference type="PATRIC" id="fig|190485.4.peg.1029"/>
<dbReference type="eggNOG" id="COG3291">
    <property type="taxonomic scope" value="Bacteria"/>
</dbReference>
<dbReference type="HOGENOM" id="CLU_658751_0_0_6"/>
<dbReference type="OrthoDB" id="3976083at2"/>
<dbReference type="Proteomes" id="UP000001010">
    <property type="component" value="Chromosome"/>
</dbReference>
<dbReference type="GO" id="GO:0046872">
    <property type="term" value="F:metal ion binding"/>
    <property type="evidence" value="ECO:0007669"/>
    <property type="project" value="UniProtKB-KW"/>
</dbReference>
<dbReference type="GO" id="GO:0008237">
    <property type="term" value="F:metallopeptidase activity"/>
    <property type="evidence" value="ECO:0007669"/>
    <property type="project" value="UniProtKB-KW"/>
</dbReference>
<dbReference type="GO" id="GO:0006508">
    <property type="term" value="P:proteolysis"/>
    <property type="evidence" value="ECO:0007669"/>
    <property type="project" value="UniProtKB-KW"/>
</dbReference>
<dbReference type="Gene3D" id="3.40.390.10">
    <property type="entry name" value="Collagenase (Catalytic Domain)"/>
    <property type="match status" value="1"/>
</dbReference>
<dbReference type="InterPro" id="IPR024079">
    <property type="entry name" value="MetalloPept_cat_dom_sf"/>
</dbReference>
<dbReference type="Pfam" id="PF13688">
    <property type="entry name" value="Reprolysin_5"/>
    <property type="match status" value="1"/>
</dbReference>
<dbReference type="SUPFAM" id="SSF55486">
    <property type="entry name" value="Metalloproteases ('zincins'), catalytic domain"/>
    <property type="match status" value="1"/>
</dbReference>
<dbReference type="PROSITE" id="PS00142">
    <property type="entry name" value="ZINC_PROTEASE"/>
    <property type="match status" value="1"/>
</dbReference>
<protein>
    <recommendedName>
        <fullName evidence="6">Peptidyl-Asp metalloendopeptidase</fullName>
        <ecNumber>3.4.24.33</ecNumber>
    </recommendedName>
    <alternativeName>
        <fullName evidence="2">Endopeptidase Asp-N</fullName>
    </alternativeName>
</protein>
<name>ASPN_XANCP</name>